<comment type="function">
    <text evidence="2 4">Catalyzes the dehydration of dTDP-D-glucose to form dTDP-6-deoxy-D-xylo-4-hexulose via a three-step process involving oxidation, dehydration and reduction (By similarity). Involved in the biosynthesis of the dTDP-L-rhamnose which is a component of the critical linker, D-N-acetylglucosamine-L-rhamnose disaccharide, which connects the galactan region of arabinogalactan to peptidoglycan via a phosphodiester linkage (PubMed:16472764).</text>
</comment>
<comment type="catalytic activity">
    <reaction evidence="2">
        <text>dTDP-alpha-D-glucose = dTDP-4-dehydro-6-deoxy-alpha-D-glucose + H2O</text>
        <dbReference type="Rhea" id="RHEA:17221"/>
        <dbReference type="ChEBI" id="CHEBI:15377"/>
        <dbReference type="ChEBI" id="CHEBI:57477"/>
        <dbReference type="ChEBI" id="CHEBI:57649"/>
        <dbReference type="EC" id="4.2.1.46"/>
    </reaction>
</comment>
<comment type="cofactor">
    <cofactor evidence="2">
        <name>NAD(+)</name>
        <dbReference type="ChEBI" id="CHEBI:57540"/>
    </cofactor>
    <text evidence="2">Binds 1 NAD(+) per subunit.</text>
</comment>
<comment type="pathway">
    <text evidence="6">Carbohydrate biosynthesis; dTDP-L-rhamnose biosynthesis.</text>
</comment>
<comment type="subunit">
    <text evidence="2">Homodimer.</text>
</comment>
<comment type="similarity">
    <text evidence="5">Belongs to the NAD(P)-dependent epimerase/dehydratase family. dTDP-glucose dehydratase subfamily.</text>
</comment>
<protein>
    <recommendedName>
        <fullName evidence="2">dTDP-glucose 4,6-dehydratase</fullName>
        <ecNumber evidence="2">4.2.1.46</ecNumber>
    </recommendedName>
</protein>
<feature type="chain" id="PRO_0000399898" description="dTDP-glucose 4,6-dehydratase">
    <location>
        <begin position="1"/>
        <end position="331"/>
    </location>
</feature>
<feature type="active site" description="Proton donor" evidence="2">
    <location>
        <position position="121"/>
    </location>
</feature>
<feature type="active site" description="Proton acceptor" evidence="2">
    <location>
        <position position="122"/>
    </location>
</feature>
<feature type="active site" description="Proton acceptor" evidence="2">
    <location>
        <position position="147"/>
    </location>
</feature>
<feature type="binding site" evidence="2">
    <location>
        <begin position="11"/>
        <end position="12"/>
    </location>
    <ligand>
        <name>NAD(+)</name>
        <dbReference type="ChEBI" id="CHEBI:57540"/>
    </ligand>
</feature>
<feature type="binding site" evidence="2">
    <location>
        <begin position="33"/>
        <end position="36"/>
    </location>
    <ligand>
        <name>NAD(+)</name>
        <dbReference type="ChEBI" id="CHEBI:57540"/>
    </ligand>
</feature>
<feature type="binding site" evidence="2">
    <location>
        <begin position="57"/>
        <end position="58"/>
    </location>
    <ligand>
        <name>NAD(+)</name>
        <dbReference type="ChEBI" id="CHEBI:57540"/>
    </ligand>
</feature>
<feature type="binding site" evidence="2">
    <location>
        <begin position="77"/>
        <end position="81"/>
    </location>
    <ligand>
        <name>NAD(+)</name>
        <dbReference type="ChEBI" id="CHEBI:57540"/>
    </ligand>
</feature>
<feature type="binding site" evidence="1">
    <location>
        <position position="81"/>
    </location>
    <ligand>
        <name>substrate</name>
    </ligand>
</feature>
<feature type="binding site" evidence="2">
    <location>
        <position position="96"/>
    </location>
    <ligand>
        <name>NAD(+)</name>
        <dbReference type="ChEBI" id="CHEBI:57540"/>
    </ligand>
</feature>
<feature type="binding site" evidence="1">
    <location>
        <position position="120"/>
    </location>
    <ligand>
        <name>substrate</name>
    </ligand>
</feature>
<feature type="binding site" evidence="2">
    <location>
        <begin position="147"/>
        <end position="151"/>
    </location>
    <ligand>
        <name>NAD(+)</name>
        <dbReference type="ChEBI" id="CHEBI:57540"/>
    </ligand>
</feature>
<feature type="binding site" evidence="1">
    <location>
        <position position="176"/>
    </location>
    <ligand>
        <name>substrate</name>
    </ligand>
</feature>
<feature type="binding site" evidence="2">
    <location>
        <position position="177"/>
    </location>
    <ligand>
        <name>NAD(+)</name>
        <dbReference type="ChEBI" id="CHEBI:57540"/>
    </ligand>
</feature>
<feature type="binding site" evidence="3">
    <location>
        <begin position="186"/>
        <end position="191"/>
    </location>
    <ligand>
        <name>substrate</name>
    </ligand>
</feature>
<feature type="binding site" evidence="3">
    <location>
        <begin position="202"/>
        <end position="204"/>
    </location>
    <ligand>
        <name>substrate</name>
    </ligand>
</feature>
<feature type="binding site" evidence="1">
    <location>
        <position position="211"/>
    </location>
    <ligand>
        <name>substrate</name>
    </ligand>
</feature>
<feature type="binding site" evidence="1">
    <location>
        <position position="246"/>
    </location>
    <ligand>
        <name>substrate</name>
    </ligand>
</feature>
<feature type="binding site" evidence="1">
    <location>
        <begin position="269"/>
        <end position="273"/>
    </location>
    <ligand>
        <name>substrate</name>
    </ligand>
</feature>
<gene>
    <name type="primary">rmlB</name>
    <name type="synonym">rfbB</name>
    <name type="ordered locus">MSMEG_1512</name>
    <name type="ordered locus">MSMEI_1476</name>
</gene>
<evidence type="ECO:0000250" key="1">
    <source>
        <dbReference type="UniProtKB" id="P26391"/>
    </source>
</evidence>
<evidence type="ECO:0000250" key="2">
    <source>
        <dbReference type="UniProtKB" id="P27830"/>
    </source>
</evidence>
<evidence type="ECO:0000250" key="3">
    <source>
        <dbReference type="UniProtKB" id="P95780"/>
    </source>
</evidence>
<evidence type="ECO:0000269" key="4">
    <source>
    </source>
</evidence>
<evidence type="ECO:0000305" key="5"/>
<evidence type="ECO:0000305" key="6">
    <source>
    </source>
</evidence>
<proteinExistence type="evidence at protein level"/>
<reference key="1">
    <citation type="submission" date="2006-10" db="EMBL/GenBank/DDBJ databases">
        <authorList>
            <person name="Fleischmann R.D."/>
            <person name="Dodson R.J."/>
            <person name="Haft D.H."/>
            <person name="Merkel J.S."/>
            <person name="Nelson W.C."/>
            <person name="Fraser C.M."/>
        </authorList>
    </citation>
    <scope>NUCLEOTIDE SEQUENCE [LARGE SCALE GENOMIC DNA]</scope>
    <source>
        <strain>ATCC 700084 / mc(2)155</strain>
    </source>
</reference>
<reference key="2">
    <citation type="journal article" date="2007" name="Genome Biol.">
        <title>Interrupted coding sequences in Mycobacterium smegmatis: authentic mutations or sequencing errors?</title>
        <authorList>
            <person name="Deshayes C."/>
            <person name="Perrodou E."/>
            <person name="Gallien S."/>
            <person name="Euphrasie D."/>
            <person name="Schaeffer C."/>
            <person name="Van-Dorsselaer A."/>
            <person name="Poch O."/>
            <person name="Lecompte O."/>
            <person name="Reyrat J.-M."/>
        </authorList>
    </citation>
    <scope>NUCLEOTIDE SEQUENCE [LARGE SCALE GENOMIC DNA]</scope>
    <source>
        <strain>ATCC 700084 / mc(2)155</strain>
    </source>
</reference>
<reference key="3">
    <citation type="journal article" date="2009" name="Genome Res.">
        <title>Ortho-proteogenomics: multiple proteomes investigation through orthology and a new MS-based protocol.</title>
        <authorList>
            <person name="Gallien S."/>
            <person name="Perrodou E."/>
            <person name="Carapito C."/>
            <person name="Deshayes C."/>
            <person name="Reyrat J.-M."/>
            <person name="Van Dorsselaer A."/>
            <person name="Poch O."/>
            <person name="Schaeffer C."/>
            <person name="Lecompte O."/>
        </authorList>
    </citation>
    <scope>NUCLEOTIDE SEQUENCE [LARGE SCALE GENOMIC DNA]</scope>
    <source>
        <strain>ATCC 700084 / mc(2)155</strain>
    </source>
</reference>
<reference key="4">
    <citation type="journal article" date="2006" name="Biochem. Biophys. Res. Commun.">
        <title>rmlB and rmlC genes are essential for growth of mycobacteria.</title>
        <authorList>
            <person name="Li W."/>
            <person name="Xin Y."/>
            <person name="McNeil M.R."/>
            <person name="Ma Y."/>
        </authorList>
    </citation>
    <scope>FUNCTION IN DTDP-RHAMNOSE BIOSYNTHESIS</scope>
    <scope>PATHWAY</scope>
</reference>
<dbReference type="EC" id="4.2.1.46" evidence="2"/>
<dbReference type="EMBL" id="CP000480">
    <property type="protein sequence ID" value="ABK70086.1"/>
    <property type="molecule type" value="Genomic_DNA"/>
</dbReference>
<dbReference type="EMBL" id="CP001663">
    <property type="protein sequence ID" value="AFP37949.1"/>
    <property type="molecule type" value="Genomic_DNA"/>
</dbReference>
<dbReference type="RefSeq" id="WP_003892900.1">
    <property type="nucleotide sequence ID" value="NZ_SIJM01000016.1"/>
</dbReference>
<dbReference type="RefSeq" id="YP_885894.1">
    <property type="nucleotide sequence ID" value="NC_008596.1"/>
</dbReference>
<dbReference type="SMR" id="A0QSK6"/>
<dbReference type="STRING" id="246196.MSMEG_1512"/>
<dbReference type="PaxDb" id="246196-MSMEI_1476"/>
<dbReference type="GeneID" id="93456354"/>
<dbReference type="KEGG" id="msb:LJ00_07555"/>
<dbReference type="KEGG" id="msg:MSMEI_1476"/>
<dbReference type="KEGG" id="msm:MSMEG_1512"/>
<dbReference type="PATRIC" id="fig|246196.19.peg.1497"/>
<dbReference type="eggNOG" id="COG1088">
    <property type="taxonomic scope" value="Bacteria"/>
</dbReference>
<dbReference type="OrthoDB" id="9801785at2"/>
<dbReference type="UniPathway" id="UPA00124"/>
<dbReference type="Proteomes" id="UP000000757">
    <property type="component" value="Chromosome"/>
</dbReference>
<dbReference type="Proteomes" id="UP000006158">
    <property type="component" value="Chromosome"/>
</dbReference>
<dbReference type="GO" id="GO:0008460">
    <property type="term" value="F:dTDP-glucose 4,6-dehydratase activity"/>
    <property type="evidence" value="ECO:0000316"/>
    <property type="project" value="UniProtKB"/>
</dbReference>
<dbReference type="GO" id="GO:0019305">
    <property type="term" value="P:dTDP-rhamnose biosynthetic process"/>
    <property type="evidence" value="ECO:0007669"/>
    <property type="project" value="UniProtKB-UniPathway"/>
</dbReference>
<dbReference type="GO" id="GO:0000271">
    <property type="term" value="P:polysaccharide biosynthetic process"/>
    <property type="evidence" value="ECO:0000316"/>
    <property type="project" value="UniProtKB"/>
</dbReference>
<dbReference type="CDD" id="cd05246">
    <property type="entry name" value="dTDP_GD_SDR_e"/>
    <property type="match status" value="1"/>
</dbReference>
<dbReference type="Gene3D" id="3.40.50.720">
    <property type="entry name" value="NAD(P)-binding Rossmann-like Domain"/>
    <property type="match status" value="1"/>
</dbReference>
<dbReference type="Gene3D" id="3.90.25.10">
    <property type="entry name" value="UDP-galactose 4-epimerase, domain 1"/>
    <property type="match status" value="1"/>
</dbReference>
<dbReference type="InterPro" id="IPR005888">
    <property type="entry name" value="dTDP_Gluc_deHydtase"/>
</dbReference>
<dbReference type="InterPro" id="IPR016040">
    <property type="entry name" value="NAD(P)-bd_dom"/>
</dbReference>
<dbReference type="InterPro" id="IPR036291">
    <property type="entry name" value="NAD(P)-bd_dom_sf"/>
</dbReference>
<dbReference type="NCBIfam" id="TIGR01181">
    <property type="entry name" value="dTDP_gluc_dehyt"/>
    <property type="match status" value="1"/>
</dbReference>
<dbReference type="PANTHER" id="PTHR43000">
    <property type="entry name" value="DTDP-D-GLUCOSE 4,6-DEHYDRATASE-RELATED"/>
    <property type="match status" value="1"/>
</dbReference>
<dbReference type="Pfam" id="PF16363">
    <property type="entry name" value="GDP_Man_Dehyd"/>
    <property type="match status" value="1"/>
</dbReference>
<dbReference type="SUPFAM" id="SSF51735">
    <property type="entry name" value="NAD(P)-binding Rossmann-fold domains"/>
    <property type="match status" value="1"/>
</dbReference>
<sequence>MRLLVTGGAGFIGANFVHLALREARTSSITVLDALTYAGSRESLAPVADRIRLVQGDITDAALVGDLVAESDAVVHFAAETHVDNALADPEPFLHSNVVGTYTILEAVRRHNVRLHHVSTDEVYGDLELDNPARFNETTPYNPSSPYSSTKAAADLLVRAWVRSYGVRATISNCSNNYGPYQHVEKFIPRQITNVLTGRRPKLYGAGANVRDWIHVDDHNSAVWRILTDGTIGRTYLIGAECERNNLTVMRTILKLMGRDPDDFDHVTDRAGHDLRYAIDPSTLQDELGWAPKHTDFEAGLTDTIDWYRANESWWRPLKDTVEAKYQERGQ</sequence>
<keyword id="KW-0456">Lyase</keyword>
<keyword id="KW-0520">NAD</keyword>
<keyword id="KW-1185">Reference proteome</keyword>
<name>RMLB_MYCS2</name>
<accession>A0QSK6</accession>
<accession>I7G5T4</accession>
<organism>
    <name type="scientific">Mycolicibacterium smegmatis (strain ATCC 700084 / mc(2)155)</name>
    <name type="common">Mycobacterium smegmatis</name>
    <dbReference type="NCBI Taxonomy" id="246196"/>
    <lineage>
        <taxon>Bacteria</taxon>
        <taxon>Bacillati</taxon>
        <taxon>Actinomycetota</taxon>
        <taxon>Actinomycetes</taxon>
        <taxon>Mycobacteriales</taxon>
        <taxon>Mycobacteriaceae</taxon>
        <taxon>Mycolicibacterium</taxon>
    </lineage>
</organism>